<keyword id="KW-1157">Cap snatching</keyword>
<keyword id="KW-0255">Endonuclease</keyword>
<keyword id="KW-1262">Eukaryotic host gene expression shutoff by virus</keyword>
<keyword id="KW-1191">Eukaryotic host transcription shutoff by virus</keyword>
<keyword id="KW-1035">Host cytoplasm</keyword>
<keyword id="KW-1190">Host gene expression shutoff by virus</keyword>
<keyword id="KW-1048">Host nucleus</keyword>
<keyword id="KW-0945">Host-virus interaction</keyword>
<keyword id="KW-0378">Hydrolase</keyword>
<keyword id="KW-1104">Inhibition of host RNA polymerase II by virus</keyword>
<keyword id="KW-0464">Manganese</keyword>
<keyword id="KW-0479">Metal-binding</keyword>
<keyword id="KW-0540">Nuclease</keyword>
<keyword id="KW-0597">Phosphoprotein</keyword>
<keyword id="KW-0688">Ribosomal frameshifting</keyword>
<name>PA_I77AD</name>
<protein>
    <recommendedName>
        <fullName evidence="2">Polymerase acidic protein</fullName>
        <ecNumber evidence="2">3.1.-.-</ecNumber>
    </recommendedName>
    <alternativeName>
        <fullName evidence="2">RNA-directed RNA polymerase subunit P2</fullName>
    </alternativeName>
</protein>
<feature type="chain" id="PRO_0000078805" description="Polymerase acidic protein">
    <location>
        <begin position="1"/>
        <end position="716"/>
    </location>
</feature>
<feature type="short sequence motif" description="Nuclear localization signal 1 (NLS1)" evidence="1 2">
    <location>
        <begin position="124"/>
        <end position="139"/>
    </location>
</feature>
<feature type="short sequence motif" description="Nuclear localization signal 2 (NLS2)" evidence="1 2">
    <location>
        <begin position="184"/>
        <end position="247"/>
    </location>
</feature>
<feature type="binding site" evidence="2">
    <location>
        <position position="41"/>
    </location>
    <ligand>
        <name>Mn(2+)</name>
        <dbReference type="ChEBI" id="CHEBI:29035"/>
        <label>1</label>
    </ligand>
</feature>
<feature type="binding site" evidence="2">
    <location>
        <position position="80"/>
    </location>
    <ligand>
        <name>Mn(2+)</name>
        <dbReference type="ChEBI" id="CHEBI:29035"/>
        <label>2</label>
    </ligand>
</feature>
<feature type="binding site" evidence="2">
    <location>
        <position position="108"/>
    </location>
    <ligand>
        <name>Mn(2+)</name>
        <dbReference type="ChEBI" id="CHEBI:29035"/>
        <label>1</label>
    </ligand>
</feature>
<feature type="binding site" evidence="2">
    <location>
        <position position="108"/>
    </location>
    <ligand>
        <name>Mn(2+)</name>
        <dbReference type="ChEBI" id="CHEBI:29035"/>
        <label>2</label>
    </ligand>
</feature>
<feature type="binding site" evidence="2">
    <location>
        <position position="120"/>
    </location>
    <ligand>
        <name>Mn(2+)</name>
        <dbReference type="ChEBI" id="CHEBI:29035"/>
        <label>1</label>
    </ligand>
</feature>
<organismHost>
    <name type="scientific">Aves</name>
    <dbReference type="NCBI Taxonomy" id="8782"/>
</organismHost>
<organismHost>
    <name type="scientific">Homo sapiens</name>
    <name type="common">Human</name>
    <dbReference type="NCBI Taxonomy" id="9606"/>
</organismHost>
<organismHost>
    <name type="scientific">Sus scrofa</name>
    <name type="common">Pig</name>
    <dbReference type="NCBI Taxonomy" id="9823"/>
</organismHost>
<accession>P13177</accession>
<evidence type="ECO:0000250" key="1">
    <source>
        <dbReference type="UniProtKB" id="P03433"/>
    </source>
</evidence>
<evidence type="ECO:0000255" key="2">
    <source>
        <dbReference type="HAMAP-Rule" id="MF_04063"/>
    </source>
</evidence>
<proteinExistence type="inferred from homology"/>
<organism>
    <name type="scientific">Influenza A virus (strain A/Swine/Tennessee/26/1977 H1N1)</name>
    <dbReference type="NCBI Taxonomy" id="384479"/>
    <lineage>
        <taxon>Viruses</taxon>
        <taxon>Riboviria</taxon>
        <taxon>Orthornavirae</taxon>
        <taxon>Negarnaviricota</taxon>
        <taxon>Polyploviricotina</taxon>
        <taxon>Insthoviricetes</taxon>
        <taxon>Articulavirales</taxon>
        <taxon>Orthomyxoviridae</taxon>
        <taxon>Alphainfluenzavirus</taxon>
        <taxon>Alphainfluenzavirus influenzae</taxon>
        <taxon>Influenza A virus</taxon>
    </lineage>
</organism>
<sequence>MEDFVRQCFNPMIVELAEKTMKEYGENPKIETNKFAAICTHMEVCFMYSDFHFINERGESIIIEPGDSNALLKHRFEIIEGRDRNMAWTVVNSICNTTGVGKPRFLPDLYDYKEDRFIKIGVTRREVHIYYLEKANKIKSEETHIHIFSFTGEEMATKADYTLDEESRARIKTRLFTIRQEMASRGLWDSFRQSERGEETIEERFEIKGTMRRLADQSLPPNFSSFDNFRAYVDGFEPNGYIEGKLSQMSREVNARIEPFLKTTPRPLRLPCGPPCFQRSKFLLMDALKLSIEDPSHEGEGIPLYDAVRCMKTFFGWKEPIIVKPHEKGINSNYLLAWKQVLAEIQDFEDEKKIPRVKNMKKTSPLKWALGENMAPEKVDFEDCKDVSDLKQYDGDEPEFRSLASWIQNEFNKACELTDSSWLEIDEIGEDIAPLEHIASMRRNYFTAEVSHCRATEYIMKGVYINTALLNASCAAMDDFQLIPMISKCRTKEGRRKTNLYGFIIKGRSHLRNDTDVVNFVSMEFSLTDPRLELHKWEKYSILEIGDMVLRTAIGQVARPMFLYVRTNGTSKIKMKWGMEMRRCLLQSLQQIESMIEAESSVKEKDMTKEFFENKSETWPIGESPKGVEEGSIGKVCRTLLAKSVFNCLYASPQLEGFSAESRKLLLIVQALRDNLEPGTFDLGGLYESIEECLINDPWVLLNASWFNSFLTHALR</sequence>
<dbReference type="EC" id="3.1.-.-" evidence="2"/>
<dbReference type="EMBL" id="M26077">
    <property type="protein sequence ID" value="AAA43681.1"/>
    <property type="molecule type" value="Genomic_RNA"/>
</dbReference>
<dbReference type="SMR" id="P13177"/>
<dbReference type="MEROPS" id="S62.001"/>
<dbReference type="GO" id="GO:0030430">
    <property type="term" value="C:host cell cytoplasm"/>
    <property type="evidence" value="ECO:0007669"/>
    <property type="project" value="UniProtKB-SubCell"/>
</dbReference>
<dbReference type="GO" id="GO:0042025">
    <property type="term" value="C:host cell nucleus"/>
    <property type="evidence" value="ECO:0007669"/>
    <property type="project" value="UniProtKB-SubCell"/>
</dbReference>
<dbReference type="GO" id="GO:0004519">
    <property type="term" value="F:endonuclease activity"/>
    <property type="evidence" value="ECO:0007669"/>
    <property type="project" value="UniProtKB-KW"/>
</dbReference>
<dbReference type="GO" id="GO:0046872">
    <property type="term" value="F:metal ion binding"/>
    <property type="evidence" value="ECO:0007669"/>
    <property type="project" value="UniProtKB-KW"/>
</dbReference>
<dbReference type="GO" id="GO:0003723">
    <property type="term" value="F:RNA binding"/>
    <property type="evidence" value="ECO:0007669"/>
    <property type="project" value="UniProtKB-UniRule"/>
</dbReference>
<dbReference type="GO" id="GO:0075526">
    <property type="term" value="P:cap snatching"/>
    <property type="evidence" value="ECO:0007669"/>
    <property type="project" value="UniProtKB-UniRule"/>
</dbReference>
<dbReference type="GO" id="GO:0006351">
    <property type="term" value="P:DNA-templated transcription"/>
    <property type="evidence" value="ECO:0007669"/>
    <property type="project" value="UniProtKB-UniRule"/>
</dbReference>
<dbReference type="GO" id="GO:0039657">
    <property type="term" value="P:symbiont-mediated suppression of host gene expression"/>
    <property type="evidence" value="ECO:0007669"/>
    <property type="project" value="UniProtKB-KW"/>
</dbReference>
<dbReference type="GO" id="GO:0039523">
    <property type="term" value="P:symbiont-mediated suppression of host mRNA transcription via inhibition of RNA polymerase II activity"/>
    <property type="evidence" value="ECO:0007669"/>
    <property type="project" value="UniProtKB-UniRule"/>
</dbReference>
<dbReference type="GO" id="GO:0039694">
    <property type="term" value="P:viral RNA genome replication"/>
    <property type="evidence" value="ECO:0007669"/>
    <property type="project" value="InterPro"/>
</dbReference>
<dbReference type="GO" id="GO:0075523">
    <property type="term" value="P:viral translational frameshifting"/>
    <property type="evidence" value="ECO:0007669"/>
    <property type="project" value="UniProtKB-KW"/>
</dbReference>
<dbReference type="FunFam" id="3.40.91.90:FF:000001">
    <property type="entry name" value="Polymerase acidic protein"/>
    <property type="match status" value="1"/>
</dbReference>
<dbReference type="Gene3D" id="3.40.91.90">
    <property type="entry name" value="Influenza RNA-dependent RNA polymerase subunit PA, endonuclease domain"/>
    <property type="match status" value="1"/>
</dbReference>
<dbReference type="HAMAP" id="MF_04063">
    <property type="entry name" value="INFV_PA"/>
    <property type="match status" value="1"/>
</dbReference>
<dbReference type="InterPro" id="IPR037534">
    <property type="entry name" value="INFV_PA"/>
</dbReference>
<dbReference type="InterPro" id="IPR001009">
    <property type="entry name" value="PA/PA-X"/>
</dbReference>
<dbReference type="InterPro" id="IPR038372">
    <property type="entry name" value="PA/PA-X_sf"/>
</dbReference>
<dbReference type="Pfam" id="PF00603">
    <property type="entry name" value="Flu_PA"/>
    <property type="match status" value="1"/>
</dbReference>
<comment type="function">
    <text evidence="2">Plays an essential role in viral RNA transcription and replication by forming the heterotrimeric polymerase complex together with PB1 and PB2 subunits. The complex transcribes viral mRNAs by using a unique mechanism called cap-snatching. It consists in the hijacking and cleavage of host capped pre-mRNAs. These short capped RNAs are then used as primers for viral mRNAs. The PB2 subunit is responsible for the binding of the 5' cap of cellular pre-mRNAs which are subsequently cleaved after 10-13 nucleotides by the PA subunit that carries the endonuclease activity.</text>
</comment>
<comment type="cofactor">
    <cofactor evidence="2">
        <name>Mn(2+)</name>
        <dbReference type="ChEBI" id="CHEBI:29035"/>
    </cofactor>
    <text evidence="2">Binds 2 manganese ions per subunit.</text>
</comment>
<comment type="subunit">
    <text evidence="1 2">Influenza RNA polymerase is composed of three subunits: PB1, PB2 and PA. Interacts (via C-terminus) with PB1 (via N-terminus).</text>
</comment>
<comment type="subcellular location">
    <subcellularLocation>
        <location evidence="2">Host cytoplasm</location>
    </subcellularLocation>
    <subcellularLocation>
        <location evidence="2">Host nucleus</location>
    </subcellularLocation>
    <text evidence="1 2">PB1 and PA are transported in the host nucleus as a complex.</text>
</comment>
<comment type="alternative products">
    <event type="ribosomal frameshifting"/>
    <isoform>
        <id>P13177-1</id>
        <name>PA</name>
        <sequence type="displayed"/>
    </isoform>
    <isoform>
        <id>P0DJV1-1</id>
        <name>PA-X</name>
        <sequence type="external"/>
    </isoform>
</comment>
<comment type="PTM">
    <text evidence="1 2">Phosphorylated on serines and threonines by host kinases, including human casein kinase II.</text>
</comment>
<comment type="similarity">
    <text evidence="2">Belongs to the influenza viruses PA family.</text>
</comment>
<gene>
    <name evidence="2" type="primary">PA</name>
</gene>
<reference key="1">
    <citation type="journal article" date="1989" name="Virology">
        <title>Evolutionary pathways of the PA genes of influenza A viruses.</title>
        <authorList>
            <person name="Okazaki K."/>
            <person name="Kawaoka Y."/>
            <person name="Webster R.G."/>
        </authorList>
    </citation>
    <scope>NUCLEOTIDE SEQUENCE [GENOMIC RNA]</scope>
</reference>